<proteinExistence type="inferred from homology"/>
<sequence length="179" mass="20264">MAKLHDYYKDEVVKQLMSQFGYDSVMQVPRVEKITLNMGVGEAIADKKLLDNAAADLAAISGQKPFITKARKSVAGFKIRQGYPIGCKVTLRGERMWEFFERLITIAVPRIRDFRGLSAKSFDGRGNYSMGVREQIIFPEIDYDKVDRVRGLDITITTTAKSDDEGRALLAAFKFPFRK</sequence>
<evidence type="ECO:0000255" key="1">
    <source>
        <dbReference type="HAMAP-Rule" id="MF_01333"/>
    </source>
</evidence>
<evidence type="ECO:0000305" key="2"/>
<reference key="1">
    <citation type="journal article" date="2006" name="J. Bacteriol.">
        <title>Complete genome sequence of Yersinia pestis strains Antiqua and Nepal516: evidence of gene reduction in an emerging pathogen.</title>
        <authorList>
            <person name="Chain P.S.G."/>
            <person name="Hu P."/>
            <person name="Malfatti S.A."/>
            <person name="Radnedge L."/>
            <person name="Larimer F."/>
            <person name="Vergez L.M."/>
            <person name="Worsham P."/>
            <person name="Chu M.C."/>
            <person name="Andersen G.L."/>
        </authorList>
    </citation>
    <scope>NUCLEOTIDE SEQUENCE [LARGE SCALE GENOMIC DNA]</scope>
    <source>
        <strain>Antiqua</strain>
    </source>
</reference>
<gene>
    <name evidence="1" type="primary">rplE</name>
    <name type="ordered locus">YPA_3251</name>
</gene>
<name>RL5_YERPA</name>
<keyword id="KW-0687">Ribonucleoprotein</keyword>
<keyword id="KW-0689">Ribosomal protein</keyword>
<keyword id="KW-0694">RNA-binding</keyword>
<keyword id="KW-0699">rRNA-binding</keyword>
<keyword id="KW-0820">tRNA-binding</keyword>
<organism>
    <name type="scientific">Yersinia pestis bv. Antiqua (strain Antiqua)</name>
    <dbReference type="NCBI Taxonomy" id="360102"/>
    <lineage>
        <taxon>Bacteria</taxon>
        <taxon>Pseudomonadati</taxon>
        <taxon>Pseudomonadota</taxon>
        <taxon>Gammaproteobacteria</taxon>
        <taxon>Enterobacterales</taxon>
        <taxon>Yersiniaceae</taxon>
        <taxon>Yersinia</taxon>
    </lineage>
</organism>
<protein>
    <recommendedName>
        <fullName evidence="1">Large ribosomal subunit protein uL5</fullName>
    </recommendedName>
    <alternativeName>
        <fullName evidence="2">50S ribosomal protein L5</fullName>
    </alternativeName>
</protein>
<accession>Q1C2V9</accession>
<dbReference type="EMBL" id="CP000308">
    <property type="protein sequence ID" value="ABG15213.1"/>
    <property type="molecule type" value="Genomic_DNA"/>
</dbReference>
<dbReference type="RefSeq" id="WP_002213329.1">
    <property type="nucleotide sequence ID" value="NZ_CP009906.1"/>
</dbReference>
<dbReference type="SMR" id="Q1C2V9"/>
<dbReference type="GeneID" id="96663184"/>
<dbReference type="KEGG" id="ypa:YPA_3251"/>
<dbReference type="Proteomes" id="UP000001971">
    <property type="component" value="Chromosome"/>
</dbReference>
<dbReference type="GO" id="GO:1990904">
    <property type="term" value="C:ribonucleoprotein complex"/>
    <property type="evidence" value="ECO:0007669"/>
    <property type="project" value="UniProtKB-KW"/>
</dbReference>
<dbReference type="GO" id="GO:0005840">
    <property type="term" value="C:ribosome"/>
    <property type="evidence" value="ECO:0007669"/>
    <property type="project" value="UniProtKB-KW"/>
</dbReference>
<dbReference type="GO" id="GO:0019843">
    <property type="term" value="F:rRNA binding"/>
    <property type="evidence" value="ECO:0007669"/>
    <property type="project" value="UniProtKB-UniRule"/>
</dbReference>
<dbReference type="GO" id="GO:0003735">
    <property type="term" value="F:structural constituent of ribosome"/>
    <property type="evidence" value="ECO:0007669"/>
    <property type="project" value="InterPro"/>
</dbReference>
<dbReference type="GO" id="GO:0000049">
    <property type="term" value="F:tRNA binding"/>
    <property type="evidence" value="ECO:0007669"/>
    <property type="project" value="UniProtKB-UniRule"/>
</dbReference>
<dbReference type="GO" id="GO:0006412">
    <property type="term" value="P:translation"/>
    <property type="evidence" value="ECO:0007669"/>
    <property type="project" value="UniProtKB-UniRule"/>
</dbReference>
<dbReference type="FunFam" id="3.30.1440.10:FF:000001">
    <property type="entry name" value="50S ribosomal protein L5"/>
    <property type="match status" value="1"/>
</dbReference>
<dbReference type="Gene3D" id="3.30.1440.10">
    <property type="match status" value="1"/>
</dbReference>
<dbReference type="HAMAP" id="MF_01333_B">
    <property type="entry name" value="Ribosomal_uL5_B"/>
    <property type="match status" value="1"/>
</dbReference>
<dbReference type="InterPro" id="IPR002132">
    <property type="entry name" value="Ribosomal_uL5"/>
</dbReference>
<dbReference type="InterPro" id="IPR020930">
    <property type="entry name" value="Ribosomal_uL5_bac-type"/>
</dbReference>
<dbReference type="InterPro" id="IPR031309">
    <property type="entry name" value="Ribosomal_uL5_C"/>
</dbReference>
<dbReference type="InterPro" id="IPR022803">
    <property type="entry name" value="Ribosomal_uL5_dom_sf"/>
</dbReference>
<dbReference type="InterPro" id="IPR031310">
    <property type="entry name" value="Ribosomal_uL5_N"/>
</dbReference>
<dbReference type="NCBIfam" id="NF000585">
    <property type="entry name" value="PRK00010.1"/>
    <property type="match status" value="1"/>
</dbReference>
<dbReference type="PANTHER" id="PTHR11994">
    <property type="entry name" value="60S RIBOSOMAL PROTEIN L11-RELATED"/>
    <property type="match status" value="1"/>
</dbReference>
<dbReference type="Pfam" id="PF00281">
    <property type="entry name" value="Ribosomal_L5"/>
    <property type="match status" value="1"/>
</dbReference>
<dbReference type="Pfam" id="PF00673">
    <property type="entry name" value="Ribosomal_L5_C"/>
    <property type="match status" value="1"/>
</dbReference>
<dbReference type="PIRSF" id="PIRSF002161">
    <property type="entry name" value="Ribosomal_L5"/>
    <property type="match status" value="1"/>
</dbReference>
<dbReference type="SUPFAM" id="SSF55282">
    <property type="entry name" value="RL5-like"/>
    <property type="match status" value="1"/>
</dbReference>
<feature type="chain" id="PRO_1000052857" description="Large ribosomal subunit protein uL5">
    <location>
        <begin position="1"/>
        <end position="179"/>
    </location>
</feature>
<comment type="function">
    <text evidence="1">This is one of the proteins that bind and probably mediate the attachment of the 5S RNA into the large ribosomal subunit, where it forms part of the central protuberance. In the 70S ribosome it contacts protein S13 of the 30S subunit (bridge B1b), connecting the 2 subunits; this bridge is implicated in subunit movement. Contacts the P site tRNA; the 5S rRNA and some of its associated proteins might help stabilize positioning of ribosome-bound tRNAs.</text>
</comment>
<comment type="subunit">
    <text evidence="1">Part of the 50S ribosomal subunit; part of the 5S rRNA/L5/L18/L25 subcomplex. Contacts the 5S rRNA and the P site tRNA. Forms a bridge to the 30S subunit in the 70S ribosome.</text>
</comment>
<comment type="similarity">
    <text evidence="1">Belongs to the universal ribosomal protein uL5 family.</text>
</comment>